<protein>
    <recommendedName>
        <fullName>Dual specificity protein kinase CLK2</fullName>
        <ecNumber>2.7.12.1</ecNumber>
    </recommendedName>
    <alternativeName>
        <fullName>CDC-like kinase 2</fullName>
    </alternativeName>
</protein>
<name>CLK2_HUMAN</name>
<keyword id="KW-0002">3D-structure</keyword>
<keyword id="KW-0025">Alternative splicing</keyword>
<keyword id="KW-0067">ATP-binding</keyword>
<keyword id="KW-0418">Kinase</keyword>
<keyword id="KW-0547">Nucleotide-binding</keyword>
<keyword id="KW-0539">Nucleus</keyword>
<keyword id="KW-0597">Phosphoprotein</keyword>
<keyword id="KW-1267">Proteomics identification</keyword>
<keyword id="KW-1185">Reference proteome</keyword>
<keyword id="KW-0723">Serine/threonine-protein kinase</keyword>
<keyword id="KW-0808">Transferase</keyword>
<keyword id="KW-0829">Tyrosine-protein kinase</keyword>
<gene>
    <name type="primary">CLK2</name>
</gene>
<proteinExistence type="evidence at protein level"/>
<reference key="1">
    <citation type="journal article" date="1994" name="J. Mol. Biol.">
        <title>Characterization by cDNA cloning of two new human protein kinases. Evidence by sequence comparison of a new family of mammalian protein kinases.</title>
        <authorList>
            <person name="Hanes J.J."/>
            <person name="der Kammer H."/>
            <person name="Klaudiny J.J."/>
            <person name="Scheit K.H."/>
        </authorList>
    </citation>
    <scope>NUCLEOTIDE SEQUENCE [MRNA] (ISOFORMS 1 AND 2)</scope>
</reference>
<reference key="2">
    <citation type="journal article" date="1997" name="Genome Res.">
        <title>Identification of three additional genes contiguous to the glucocerebrosidase locus on chromosome 1q21: implications for Gaucher disease.</title>
        <authorList>
            <person name="Winfield S.L."/>
            <person name="Tayebi N."/>
            <person name="Martin B.M."/>
            <person name="Ginns E.I."/>
            <person name="Sidransky E."/>
        </authorList>
    </citation>
    <scope>NUCLEOTIDE SEQUENCE [GENOMIC DNA] (ISOFORM 1)</scope>
</reference>
<reference key="3">
    <citation type="journal article" date="2006" name="Nature">
        <title>The DNA sequence and biological annotation of human chromosome 1.</title>
        <authorList>
            <person name="Gregory S.G."/>
            <person name="Barlow K.F."/>
            <person name="McLay K.E."/>
            <person name="Kaul R."/>
            <person name="Swarbreck D."/>
            <person name="Dunham A."/>
            <person name="Scott C.E."/>
            <person name="Howe K.L."/>
            <person name="Woodfine K."/>
            <person name="Spencer C.C.A."/>
            <person name="Jones M.C."/>
            <person name="Gillson C."/>
            <person name="Searle S."/>
            <person name="Zhou Y."/>
            <person name="Kokocinski F."/>
            <person name="McDonald L."/>
            <person name="Evans R."/>
            <person name="Phillips K."/>
            <person name="Atkinson A."/>
            <person name="Cooper R."/>
            <person name="Jones C."/>
            <person name="Hall R.E."/>
            <person name="Andrews T.D."/>
            <person name="Lloyd C."/>
            <person name="Ainscough R."/>
            <person name="Almeida J.P."/>
            <person name="Ambrose K.D."/>
            <person name="Anderson F."/>
            <person name="Andrew R.W."/>
            <person name="Ashwell R.I.S."/>
            <person name="Aubin K."/>
            <person name="Babbage A.K."/>
            <person name="Bagguley C.L."/>
            <person name="Bailey J."/>
            <person name="Beasley H."/>
            <person name="Bethel G."/>
            <person name="Bird C.P."/>
            <person name="Bray-Allen S."/>
            <person name="Brown J.Y."/>
            <person name="Brown A.J."/>
            <person name="Buckley D."/>
            <person name="Burton J."/>
            <person name="Bye J."/>
            <person name="Carder C."/>
            <person name="Chapman J.C."/>
            <person name="Clark S.Y."/>
            <person name="Clarke G."/>
            <person name="Clee C."/>
            <person name="Cobley V."/>
            <person name="Collier R.E."/>
            <person name="Corby N."/>
            <person name="Coville G.J."/>
            <person name="Davies J."/>
            <person name="Deadman R."/>
            <person name="Dunn M."/>
            <person name="Earthrowl M."/>
            <person name="Ellington A.G."/>
            <person name="Errington H."/>
            <person name="Frankish A."/>
            <person name="Frankland J."/>
            <person name="French L."/>
            <person name="Garner P."/>
            <person name="Garnett J."/>
            <person name="Gay L."/>
            <person name="Ghori M.R.J."/>
            <person name="Gibson R."/>
            <person name="Gilby L.M."/>
            <person name="Gillett W."/>
            <person name="Glithero R.J."/>
            <person name="Grafham D.V."/>
            <person name="Griffiths C."/>
            <person name="Griffiths-Jones S."/>
            <person name="Grocock R."/>
            <person name="Hammond S."/>
            <person name="Harrison E.S.I."/>
            <person name="Hart E."/>
            <person name="Haugen E."/>
            <person name="Heath P.D."/>
            <person name="Holmes S."/>
            <person name="Holt K."/>
            <person name="Howden P.J."/>
            <person name="Hunt A.R."/>
            <person name="Hunt S.E."/>
            <person name="Hunter G."/>
            <person name="Isherwood J."/>
            <person name="James R."/>
            <person name="Johnson C."/>
            <person name="Johnson D."/>
            <person name="Joy A."/>
            <person name="Kay M."/>
            <person name="Kershaw J.K."/>
            <person name="Kibukawa M."/>
            <person name="Kimberley A.M."/>
            <person name="King A."/>
            <person name="Knights A.J."/>
            <person name="Lad H."/>
            <person name="Laird G."/>
            <person name="Lawlor S."/>
            <person name="Leongamornlert D.A."/>
            <person name="Lloyd D.M."/>
            <person name="Loveland J."/>
            <person name="Lovell J."/>
            <person name="Lush M.J."/>
            <person name="Lyne R."/>
            <person name="Martin S."/>
            <person name="Mashreghi-Mohammadi M."/>
            <person name="Matthews L."/>
            <person name="Matthews N.S.W."/>
            <person name="McLaren S."/>
            <person name="Milne S."/>
            <person name="Mistry S."/>
            <person name="Moore M.J.F."/>
            <person name="Nickerson T."/>
            <person name="O'Dell C.N."/>
            <person name="Oliver K."/>
            <person name="Palmeiri A."/>
            <person name="Palmer S.A."/>
            <person name="Parker A."/>
            <person name="Patel D."/>
            <person name="Pearce A.V."/>
            <person name="Peck A.I."/>
            <person name="Pelan S."/>
            <person name="Phelps K."/>
            <person name="Phillimore B.J."/>
            <person name="Plumb R."/>
            <person name="Rajan J."/>
            <person name="Raymond C."/>
            <person name="Rouse G."/>
            <person name="Saenphimmachak C."/>
            <person name="Sehra H.K."/>
            <person name="Sheridan E."/>
            <person name="Shownkeen R."/>
            <person name="Sims S."/>
            <person name="Skuce C.D."/>
            <person name="Smith M."/>
            <person name="Steward C."/>
            <person name="Subramanian S."/>
            <person name="Sycamore N."/>
            <person name="Tracey A."/>
            <person name="Tromans A."/>
            <person name="Van Helmond Z."/>
            <person name="Wall M."/>
            <person name="Wallis J.M."/>
            <person name="White S."/>
            <person name="Whitehead S.L."/>
            <person name="Wilkinson J.E."/>
            <person name="Willey D.L."/>
            <person name="Williams H."/>
            <person name="Wilming L."/>
            <person name="Wray P.W."/>
            <person name="Wu Z."/>
            <person name="Coulson A."/>
            <person name="Vaudin M."/>
            <person name="Sulston J.E."/>
            <person name="Durbin R.M."/>
            <person name="Hubbard T."/>
            <person name="Wooster R."/>
            <person name="Dunham I."/>
            <person name="Carter N.P."/>
            <person name="McVean G."/>
            <person name="Ross M.T."/>
            <person name="Harrow J."/>
            <person name="Olson M.V."/>
            <person name="Beck S."/>
            <person name="Rogers J."/>
            <person name="Bentley D.R."/>
        </authorList>
    </citation>
    <scope>NUCLEOTIDE SEQUENCE [LARGE SCALE GENOMIC DNA]</scope>
</reference>
<reference key="4">
    <citation type="journal article" date="2004" name="Genome Res.">
        <title>The status, quality, and expansion of the NIH full-length cDNA project: the Mammalian Gene Collection (MGC).</title>
        <authorList>
            <consortium name="The MGC Project Team"/>
        </authorList>
    </citation>
    <scope>NUCLEOTIDE SEQUENCE [LARGE SCALE MRNA] (ISOFORMS 1 AND 3)</scope>
    <source>
        <tissue>Lung</tissue>
        <tissue>Ovary</tissue>
    </source>
</reference>
<reference key="5">
    <citation type="journal article" date="1996" name="J. Biol. Chem.">
        <title>Activity and autophosphorylation of LAMMER protein kinases.</title>
        <authorList>
            <person name="Lee K."/>
            <person name="Du C."/>
            <person name="Horn M."/>
            <person name="Rabinow L."/>
        </authorList>
    </citation>
    <scope>FUNCTION</scope>
</reference>
<reference key="6">
    <citation type="journal article" date="1998" name="Exp. Cell Res.">
        <title>The Clk2 and Clk3 dual-specificity protein kinases regulate the intranuclear distribution of SR proteins and influence pre-mRNA splicing.</title>
        <authorList>
            <person name="Duncan P.I."/>
            <person name="Stojdl D.F."/>
            <person name="Marius R.M."/>
            <person name="Scheit K.H."/>
            <person name="Bell J.C."/>
        </authorList>
    </citation>
    <scope>FUNCTION</scope>
    <scope>SUBCELLULAR LOCATION</scope>
    <scope>PHOSPHORYLATION</scope>
</reference>
<reference key="7">
    <citation type="journal article" date="1999" name="J. Biol. Chem.">
        <title>The CLK family kinases, CLK1 and CLK2, phosphorylate and activate the tyrosine phosphatase, PTP-1B.</title>
        <authorList>
            <person name="Moeslein F.M."/>
            <person name="Myers M.P."/>
            <person name="Landreth G.E."/>
        </authorList>
    </citation>
    <scope>FUNCTION</scope>
</reference>
<reference key="8">
    <citation type="journal article" date="2003" name="Biochem. Biophys. Res. Commun.">
        <title>Beacon interacts with cdc2/cdc28-like kinases.</title>
        <authorList>
            <person name="Kantham L."/>
            <person name="Kerr-Bayles L."/>
            <person name="Godde N."/>
            <person name="Quick M."/>
            <person name="Webb R."/>
            <person name="Sunderland T."/>
            <person name="Bond J."/>
            <person name="Walder K."/>
            <person name="Augert G."/>
            <person name="Collier G."/>
        </authorList>
    </citation>
    <scope>INTERACTION WITH UBL5</scope>
</reference>
<reference key="9">
    <citation type="journal article" date="2004" name="Genome Biol.">
        <title>An unappreciated role for RNA surveillance.</title>
        <authorList>
            <person name="Hillman R.T."/>
            <person name="Green R.E."/>
            <person name="Brenner S.E."/>
        </authorList>
    </citation>
    <scope>SPLICE ISOFORM(S) THAT ARE POTENTIAL NMD TARGET(S)</scope>
</reference>
<reference key="10">
    <citation type="journal article" date="2008" name="Mol. Cell">
        <title>Kinase-selective enrichment enables quantitative phosphoproteomics of the kinome across the cell cycle.</title>
        <authorList>
            <person name="Daub H."/>
            <person name="Olsen J.V."/>
            <person name="Bairlein M."/>
            <person name="Gnad F."/>
            <person name="Oppermann F.S."/>
            <person name="Korner R."/>
            <person name="Greff Z."/>
            <person name="Keri G."/>
            <person name="Stemmann O."/>
            <person name="Mann M."/>
        </authorList>
    </citation>
    <scope>PHOSPHORYLATION [LARGE SCALE ANALYSIS] AT SER-142</scope>
    <scope>IDENTIFICATION BY MASS SPECTROMETRY [LARGE SCALE ANALYSIS]</scope>
    <source>
        <tissue>Cervix carcinoma</tissue>
    </source>
</reference>
<reference key="11">
    <citation type="journal article" date="2008" name="Proc. Natl. Acad. Sci. U.S.A.">
        <title>A quantitative atlas of mitotic phosphorylation.</title>
        <authorList>
            <person name="Dephoure N."/>
            <person name="Zhou C."/>
            <person name="Villen J."/>
            <person name="Beausoleil S.A."/>
            <person name="Bakalarski C.E."/>
            <person name="Elledge S.J."/>
            <person name="Gygi S.P."/>
        </authorList>
    </citation>
    <scope>PHOSPHORYLATION [LARGE SCALE ANALYSIS] AT SER-142</scope>
    <scope>IDENTIFICATION BY MASS SPECTROMETRY [LARGE SCALE ANALYSIS]</scope>
    <source>
        <tissue>Cervix carcinoma</tissue>
    </source>
</reference>
<reference key="12">
    <citation type="journal article" date="2009" name="Circ. Res.">
        <title>Cdc2-like kinases and DNA topoisomerase I regulate alternative splicing of tissue factor in human endothelial cells.</title>
        <authorList>
            <person name="Eisenreich A."/>
            <person name="Bogdanov V.Y."/>
            <person name="Zakrzewicz A."/>
            <person name="Pries A."/>
            <person name="Antoniak S."/>
            <person name="Poller W."/>
            <person name="Schultheiss H.P."/>
            <person name="Rauch U."/>
        </authorList>
    </citation>
    <scope>FUNCTION</scope>
    <scope>ALTERNATIVE SPLICING</scope>
    <scope>TISSUE SPECIFICITY</scope>
</reference>
<reference key="13">
    <citation type="journal article" date="2009" name="J. Biol. Chem.">
        <title>Heterogeneous nuclear ribonucleoprotein G regulates splice site selection by binding to CC(A/C)-rich regions in pre-mRNA.</title>
        <authorList>
            <person name="Heinrich B."/>
            <person name="Zhang Z."/>
            <person name="Raitskin O."/>
            <person name="Hiller M."/>
            <person name="Benderska N."/>
            <person name="Hartmann A.M."/>
            <person name="Bracco L."/>
            <person name="Elliott D."/>
            <person name="Ben-Ari S."/>
            <person name="Soreq H."/>
            <person name="Sperling J."/>
            <person name="Sperling R."/>
            <person name="Stamm S."/>
        </authorList>
    </citation>
    <scope>INTERACTION WITH RBMX</scope>
</reference>
<reference key="14">
    <citation type="journal article" date="2009" name="Mol. Cell. Proteomics">
        <title>Large-scale proteomics analysis of the human kinome.</title>
        <authorList>
            <person name="Oppermann F.S."/>
            <person name="Gnad F."/>
            <person name="Olsen J.V."/>
            <person name="Hornberger R."/>
            <person name="Greff Z."/>
            <person name="Keri G."/>
            <person name="Mann M."/>
            <person name="Daub H."/>
        </authorList>
    </citation>
    <scope>PHOSPHORYLATION [LARGE SCALE ANALYSIS] AT SER-142 AND TYR-153</scope>
    <scope>IDENTIFICATION BY MASS SPECTROMETRY [LARGE SCALE ANALYSIS]</scope>
</reference>
<reference key="15">
    <citation type="journal article" date="2010" name="J. Biol. Chem.">
        <title>Phosphorylation of CLK2 at serine 34 and threonine 127 by AKT controls cell survival after ionizing radiation.</title>
        <authorList>
            <person name="Nam S.Y."/>
            <person name="Seo H.H."/>
            <person name="Park H.S."/>
            <person name="An S."/>
            <person name="Kim J.Y."/>
            <person name="Yang K.H."/>
            <person name="Kim C.S."/>
            <person name="Jeong M."/>
            <person name="Jin Y.W."/>
        </authorList>
    </citation>
    <scope>PHOSPHORYLATION AT SER-34 AND THR-127</scope>
    <scope>INTERACTION WITH AKT1</scope>
</reference>
<reference key="16">
    <citation type="journal article" date="2013" name="J. Proteome Res.">
        <title>Toward a comprehensive characterization of a human cancer cell phosphoproteome.</title>
        <authorList>
            <person name="Zhou H."/>
            <person name="Di Palma S."/>
            <person name="Preisinger C."/>
            <person name="Peng M."/>
            <person name="Polat A.N."/>
            <person name="Heck A.J."/>
            <person name="Mohammed S."/>
        </authorList>
    </citation>
    <scope>PHOSPHORYLATION [LARGE SCALE ANALYSIS] AT SER-98 AND SER-142</scope>
    <scope>IDENTIFICATION BY MASS SPECTROMETRY [LARGE SCALE ANALYSIS]</scope>
    <source>
        <tissue>Cervix carcinoma</tissue>
        <tissue>Erythroleukemia</tissue>
    </source>
</reference>
<reference key="17">
    <citation type="journal article" date="2017" name="Proc. Natl. Acad. Sci. U.S.A.">
        <title>Phosphorylation-induced conformational dynamics in an intrinsically disordered protein and potential role in phenotypic heterogeneity.</title>
        <authorList>
            <person name="Kulkarni P."/>
            <person name="Jolly M.K."/>
            <person name="Jia D."/>
            <person name="Mooney S.M."/>
            <person name="Bhargava A."/>
            <person name="Kagohara L.T."/>
            <person name="Chen Y."/>
            <person name="Hao P."/>
            <person name="He Y."/>
            <person name="Veltri R.W."/>
            <person name="Grishaev A."/>
            <person name="Weninger K."/>
            <person name="Levine H."/>
            <person name="Orban J."/>
        </authorList>
    </citation>
    <scope>FUNCTION</scope>
    <scope>SUBCELLULAR LOCATION</scope>
    <scope>TISSUE SPECIFICITY</scope>
</reference>
<reference key="18">
    <citation type="submission" date="2010-08" db="PDB data bank">
        <title>Structure of human cdc2-like kinase 2 (clk2).</title>
        <authorList>
            <consortium name="Structural genomics consortium (SGC)"/>
        </authorList>
    </citation>
    <scope>X-RAY CRYSTALLOGRAPHY (2.89 ANGSTROMS) OF 135-496</scope>
</reference>
<comment type="function">
    <text evidence="6 8 11 12 13">Dual specificity kinase acting on both serine/threonine and tyrosine-containing substrates. Phosphorylates serine- and arginine-rich (SR) proteins of the spliceosomal complex. May be a constituent of a network of regulatory mechanisms that enable SR proteins to control RNA splicing and can cause redistribution of SR proteins from speckles to a diffuse nucleoplasmic distribution. Acts as a suppressor of hepatic gluconeogenesis and glucose output by repressing PPARGC1A transcriptional activity on gluconeogenic genes via its phosphorylation. Phosphorylates PPP2R5B thereby stimulating the assembly of PP2A phosphatase with the PPP2R5B-AKT1 complex leading to dephosphorylation of AKT1. Phosphorylates: PTPN1, SRSF1 and SRSF3. Regulates the alternative splicing of tissue factor (F3) pre-mRNA in endothelial cells. Phosphorylates PAGE4 at several serine and threonine residues and this phosphorylation attenuates the ability of PAGE4 to potentiate the transcriptional activator activity of JUN (PubMed:28289210).</text>
</comment>
<comment type="catalytic activity">
    <reaction>
        <text>L-seryl-[protein] + ATP = O-phospho-L-seryl-[protein] + ADP + H(+)</text>
        <dbReference type="Rhea" id="RHEA:17989"/>
        <dbReference type="Rhea" id="RHEA-COMP:9863"/>
        <dbReference type="Rhea" id="RHEA-COMP:11604"/>
        <dbReference type="ChEBI" id="CHEBI:15378"/>
        <dbReference type="ChEBI" id="CHEBI:29999"/>
        <dbReference type="ChEBI" id="CHEBI:30616"/>
        <dbReference type="ChEBI" id="CHEBI:83421"/>
        <dbReference type="ChEBI" id="CHEBI:456216"/>
        <dbReference type="EC" id="2.7.12.1"/>
    </reaction>
</comment>
<comment type="catalytic activity">
    <reaction>
        <text>L-threonyl-[protein] + ATP = O-phospho-L-threonyl-[protein] + ADP + H(+)</text>
        <dbReference type="Rhea" id="RHEA:46608"/>
        <dbReference type="Rhea" id="RHEA-COMP:11060"/>
        <dbReference type="Rhea" id="RHEA-COMP:11605"/>
        <dbReference type="ChEBI" id="CHEBI:15378"/>
        <dbReference type="ChEBI" id="CHEBI:30013"/>
        <dbReference type="ChEBI" id="CHEBI:30616"/>
        <dbReference type="ChEBI" id="CHEBI:61977"/>
        <dbReference type="ChEBI" id="CHEBI:456216"/>
        <dbReference type="EC" id="2.7.12.1"/>
    </reaction>
</comment>
<comment type="catalytic activity">
    <reaction>
        <text>L-tyrosyl-[protein] + ATP = O-phospho-L-tyrosyl-[protein] + ADP + H(+)</text>
        <dbReference type="Rhea" id="RHEA:10596"/>
        <dbReference type="Rhea" id="RHEA-COMP:10136"/>
        <dbReference type="Rhea" id="RHEA-COMP:20101"/>
        <dbReference type="ChEBI" id="CHEBI:15378"/>
        <dbReference type="ChEBI" id="CHEBI:30616"/>
        <dbReference type="ChEBI" id="CHEBI:46858"/>
        <dbReference type="ChEBI" id="CHEBI:61978"/>
        <dbReference type="ChEBI" id="CHEBI:456216"/>
        <dbReference type="EC" id="2.7.12.1"/>
    </reaction>
</comment>
<comment type="activity regulation">
    <text evidence="1">5,6-dichloro-1-b-D-ribofuranosylbenzimidazole (DRB) inhibits autophosphorylation. TG003 inhibits its kinase activity and affects the regulation of alternative splicing mediated by phosphorylation of SR proteins (By similarity).</text>
</comment>
<comment type="subunit">
    <text evidence="7 9 10">Interacts with RBMX. Interacts with AKT1 and UBL5.</text>
</comment>
<comment type="interaction">
    <interactant intactId="EBI-750020">
        <id>P49760</id>
    </interactant>
    <interactant intactId="EBI-1993677">
        <id>Q9BZE9</id>
        <label>ASPSCR1</label>
    </interactant>
    <organismsDiffer>false</organismsDiffer>
    <experiments>3</experiments>
</comment>
<comment type="interaction">
    <interactant intactId="EBI-750020">
        <id>P49760</id>
    </interactant>
    <interactant intactId="EBI-348479">
        <id>Q8WUQ7</id>
        <label>CACTIN</label>
    </interactant>
    <organismsDiffer>false</organismsDiffer>
    <experiments>3</experiments>
</comment>
<comment type="interaction">
    <interactant intactId="EBI-750020">
        <id>P49760</id>
    </interactant>
    <interactant intactId="EBI-751069">
        <id>Q8N2M8</id>
        <label>CLASRP</label>
    </interactant>
    <organismsDiffer>false</organismsDiffer>
    <experiments>4</experiments>
</comment>
<comment type="interaction">
    <interactant intactId="EBI-750020">
        <id>P49760</id>
    </interactant>
    <interactant intactId="EBI-11981867">
        <id>P49759-3</id>
        <label>CLK1</label>
    </interactant>
    <organismsDiffer>false</organismsDiffer>
    <experiments>5</experiments>
</comment>
<comment type="interaction">
    <interactant intactId="EBI-750020">
        <id>P49760</id>
    </interactant>
    <interactant intactId="EBI-750020">
        <id>P49760</id>
        <label>CLK2</label>
    </interactant>
    <organismsDiffer>false</organismsDiffer>
    <experiments>6</experiments>
</comment>
<comment type="interaction">
    <interactant intactId="EBI-750020">
        <id>P49760</id>
    </interactant>
    <interactant intactId="EBI-745579">
        <id>P49761</id>
        <label>CLK3</label>
    </interactant>
    <organismsDiffer>false</organismsDiffer>
    <experiments>15</experiments>
</comment>
<comment type="interaction">
    <interactant intactId="EBI-750020">
        <id>P49760</id>
    </interactant>
    <interactant intactId="EBI-746909">
        <id>Q8N684</id>
        <label>CPSF7</label>
    </interactant>
    <organismsDiffer>false</organismsDiffer>
    <experiments>3</experiments>
</comment>
<comment type="interaction">
    <interactant intactId="EBI-750020">
        <id>P49760</id>
    </interactant>
    <interactant intactId="EBI-742054">
        <id>Q96D03</id>
        <label>DDIT4L</label>
    </interactant>
    <organismsDiffer>false</organismsDiffer>
    <experiments>3</experiments>
</comment>
<comment type="interaction">
    <interactant intactId="EBI-750020">
        <id>P49760</id>
    </interactant>
    <interactant intactId="EBI-2859983">
        <id>P42892</id>
        <label>ECE1</label>
    </interactant>
    <organismsDiffer>false</organismsDiffer>
    <experiments>6</experiments>
</comment>
<comment type="interaction">
    <interactant intactId="EBI-750020">
        <id>P49760</id>
    </interactant>
    <interactant intactId="EBI-2339219">
        <id>Q08426</id>
        <label>EHHADH</label>
    </interactant>
    <organismsDiffer>false</organismsDiffer>
    <experiments>3</experiments>
</comment>
<comment type="interaction">
    <interactant intactId="EBI-750020">
        <id>P49760</id>
    </interactant>
    <interactant intactId="EBI-10172181">
        <id>Q53SE7</id>
        <label>FLJ13057</label>
    </interactant>
    <organismsDiffer>false</organismsDiffer>
    <experiments>3</experiments>
</comment>
<comment type="interaction">
    <interactant intactId="EBI-750020">
        <id>P49760</id>
    </interactant>
    <interactant intactId="EBI-6115579">
        <id>Q9BX10</id>
        <label>GTPBP2</label>
    </interactant>
    <organismsDiffer>false</organismsDiffer>
    <experiments>3</experiments>
</comment>
<comment type="interaction">
    <interactant intactId="EBI-750020">
        <id>P49760</id>
    </interactant>
    <interactant intactId="EBI-746999">
        <id>O95198</id>
        <label>KLHL2</label>
    </interactant>
    <organismsDiffer>false</organismsDiffer>
    <experiments>6</experiments>
</comment>
<comment type="interaction">
    <interactant intactId="EBI-750020">
        <id>P49760</id>
    </interactant>
    <interactant intactId="EBI-739832">
        <id>Q8TBB1</id>
        <label>LNX1</label>
    </interactant>
    <organismsDiffer>false</organismsDiffer>
    <experiments>8</experiments>
</comment>
<comment type="interaction">
    <interactant intactId="EBI-750020">
        <id>P49760</id>
    </interactant>
    <interactant intactId="EBI-10198848">
        <id>Q9P127</id>
        <label>LUZP4</label>
    </interactant>
    <organismsDiffer>false</organismsDiffer>
    <experiments>6</experiments>
</comment>
<comment type="interaction">
    <interactant intactId="EBI-750020">
        <id>P49760</id>
    </interactant>
    <interactant intactId="EBI-721368">
        <id>Q9BYD3</id>
        <label>MRPL4</label>
    </interactant>
    <organismsDiffer>false</organismsDiffer>
    <experiments>3</experiments>
</comment>
<comment type="interaction">
    <interactant intactId="EBI-750020">
        <id>P49760</id>
    </interactant>
    <interactant intactId="EBI-398874">
        <id>Q9UBU9</id>
        <label>NXF1</label>
    </interactant>
    <organismsDiffer>false</organismsDiffer>
    <experiments>3</experiments>
</comment>
<comment type="interaction">
    <interactant intactId="EBI-750020">
        <id>P49760</id>
    </interactant>
    <interactant intactId="EBI-13066730">
        <id>P04553</id>
        <label>PRM1</label>
    </interactant>
    <organismsDiffer>false</organismsDiffer>
    <experiments>3</experiments>
</comment>
<comment type="interaction">
    <interactant intactId="EBI-750020">
        <id>P49760</id>
    </interactant>
    <interactant intactId="EBI-715374">
        <id>Q8NAV1</id>
        <label>PRPF38A</label>
    </interactant>
    <organismsDiffer>false</organismsDiffer>
    <experiments>3</experiments>
</comment>
<comment type="interaction">
    <interactant intactId="EBI-750020">
        <id>P49760</id>
    </interactant>
    <interactant intactId="EBI-395290">
        <id>Q14498</id>
        <label>RBM39</label>
    </interactant>
    <organismsDiffer>false</organismsDiffer>
    <experiments>9</experiments>
</comment>
<comment type="interaction">
    <interactant intactId="EBI-750020">
        <id>P49760</id>
    </interactant>
    <interactant intactId="EBI-373337">
        <id>O76064</id>
        <label>RNF8</label>
    </interactant>
    <organismsDiffer>false</organismsDiffer>
    <experiments>5</experiments>
</comment>
<comment type="interaction">
    <interactant intactId="EBI-750020">
        <id>P49760</id>
    </interactant>
    <interactant intactId="EBI-10176640">
        <id>D3DU92</id>
        <label>rnps1</label>
    </interactant>
    <organismsDiffer>false</organismsDiffer>
    <experiments>5</experiments>
</comment>
<comment type="interaction">
    <interactant intactId="EBI-750020">
        <id>P49760</id>
    </interactant>
    <interactant intactId="EBI-395959">
        <id>Q15287</id>
        <label>RNPS1</label>
    </interactant>
    <organismsDiffer>false</organismsDiffer>
    <experiments>5</experiments>
</comment>
<comment type="interaction">
    <interactant intactId="EBI-750020">
        <id>P49760</id>
    </interactant>
    <interactant intactId="EBI-745604">
        <id>Q9BUV0</id>
        <label>RSRP1</label>
    </interactant>
    <organismsDiffer>false</organismsDiffer>
    <experiments>14</experiments>
</comment>
<comment type="interaction">
    <interactant intactId="EBI-750020">
        <id>P49760</id>
    </interactant>
    <interactant intactId="EBI-727004">
        <id>O00560</id>
        <label>SDCBP</label>
    </interactant>
    <organismsDiffer>false</organismsDiffer>
    <experiments>3</experiments>
</comment>
<comment type="interaction">
    <interactant intactId="EBI-750020">
        <id>P49760</id>
    </interactant>
    <interactant intactId="EBI-749336">
        <id>Q8TAD8</id>
        <label>SNIP1</label>
    </interactant>
    <organismsDiffer>false</organismsDiffer>
    <experiments>9</experiments>
</comment>
<comment type="interaction">
    <interactant intactId="EBI-750020">
        <id>P49760</id>
    </interactant>
    <interactant intactId="EBI-1049228">
        <id>P08621</id>
        <label>SNRNP70</label>
    </interactant>
    <organismsDiffer>false</organismsDiffer>
    <experiments>7</experiments>
</comment>
<comment type="interaction">
    <interactant intactId="EBI-750020">
        <id>P49760</id>
    </interactant>
    <interactant intactId="EBI-593303">
        <id>P78362</id>
        <label>SRPK2</label>
    </interactant>
    <organismsDiffer>false</organismsDiffer>
    <experiments>3</experiments>
</comment>
<comment type="interaction">
    <interactant intactId="EBI-750020">
        <id>P49760</id>
    </interactant>
    <interactant intactId="EBI-1055880">
        <id>Q8IYB3</id>
        <label>SRRM1</label>
    </interactant>
    <organismsDiffer>false</organismsDiffer>
    <experiments>6</experiments>
</comment>
<comment type="interaction">
    <interactant intactId="EBI-750020">
        <id>P49760</id>
    </interactant>
    <interactant intactId="EBI-372557">
        <id>P84103</id>
        <label>SRSF3</label>
    </interactant>
    <organismsDiffer>false</organismsDiffer>
    <experiments>4</experiments>
</comment>
<comment type="interaction">
    <interactant intactId="EBI-750020">
        <id>P49760</id>
    </interactant>
    <interactant intactId="EBI-14211313">
        <id>B2RWP4</id>
        <label>TACC2</label>
    </interactant>
    <organismsDiffer>false</organismsDiffer>
    <experiments>3</experiments>
</comment>
<comment type="interaction">
    <interactant intactId="EBI-750020">
        <id>P49760</id>
    </interactant>
    <interactant intactId="EBI-719493">
        <id>P14373</id>
        <label>TRIM27</label>
    </interactant>
    <organismsDiffer>false</organismsDiffer>
    <experiments>4</experiments>
</comment>
<comment type="interaction">
    <interactant intactId="EBI-750020">
        <id>P49760</id>
    </interactant>
    <interactant intactId="EBI-9867283">
        <id>Q86XT4</id>
        <label>TRIM50</label>
    </interactant>
    <organismsDiffer>false</organismsDiffer>
    <experiments>3</experiments>
</comment>
<comment type="interaction">
    <interactant intactId="EBI-750020">
        <id>P49760</id>
    </interactant>
    <interactant intactId="EBI-10176676">
        <id>Q01081-2</id>
        <label>U2AF1</label>
    </interactant>
    <organismsDiffer>false</organismsDiffer>
    <experiments>3</experiments>
</comment>
<comment type="interaction">
    <interactant intactId="EBI-750020">
        <id>P49760</id>
    </interactant>
    <interactant intactId="EBI-10180829">
        <id>Q7KZS0</id>
        <label>UBE2I</label>
    </interactant>
    <organismsDiffer>false</organismsDiffer>
    <experiments>6</experiments>
</comment>
<comment type="interaction">
    <interactant intactId="EBI-750020">
        <id>P49760</id>
    </interactant>
    <interactant intactId="EBI-2849854">
        <id>Q96MU7</id>
        <label>YTHDC1</label>
    </interactant>
    <organismsDiffer>false</organismsDiffer>
    <experiments>7</experiments>
</comment>
<comment type="interaction">
    <interactant intactId="EBI-750020">
        <id>P49760</id>
    </interactant>
    <interactant intactId="EBI-749129">
        <id>P52737</id>
        <label>ZNF136</label>
    </interactant>
    <organismsDiffer>false</organismsDiffer>
    <experiments>3</experiments>
</comment>
<comment type="interaction">
    <interactant intactId="EBI-750020">
        <id>P49760</id>
    </interactant>
    <interactant intactId="EBI-744493">
        <id>O14978</id>
        <label>ZNF263</label>
    </interactant>
    <organismsDiffer>false</organismsDiffer>
    <experiments>3</experiments>
</comment>
<comment type="interaction">
    <interactant intactId="EBI-750020">
        <id>P49760</id>
    </interactant>
    <interactant intactId="EBI-1210473">
        <id>Q96PQ6</id>
        <label>ZNF317</label>
    </interactant>
    <organismsDiffer>false</organismsDiffer>
    <experiments>3</experiments>
</comment>
<comment type="interaction">
    <interactant intactId="EBI-750020">
        <id>P49760</id>
    </interactant>
    <interactant intactId="EBI-10211248">
        <id>Q53GI3</id>
        <label>ZNF394</label>
    </interactant>
    <organismsDiffer>false</organismsDiffer>
    <experiments>3</experiments>
</comment>
<comment type="interaction">
    <interactant intactId="EBI-750020">
        <id>P49760</id>
    </interactant>
    <interactant intactId="EBI-8643207">
        <id>Q8TD17</id>
        <label>ZNF398</label>
    </interactant>
    <organismsDiffer>false</organismsDiffer>
    <experiments>6</experiments>
</comment>
<comment type="interaction">
    <interactant intactId="EBI-750020">
        <id>P49760</id>
    </interactant>
    <interactant intactId="EBI-8489702">
        <id>Q9C0F3</id>
        <label>ZNF436</label>
    </interactant>
    <organismsDiffer>false</organismsDiffer>
    <experiments>3</experiments>
</comment>
<comment type="interaction">
    <interactant intactId="EBI-750020">
        <id>P49760</id>
    </interactant>
    <interactant intactId="EBI-726439">
        <id>Q8IYI8</id>
        <label>ZNF440</label>
    </interactant>
    <organismsDiffer>false</organismsDiffer>
    <experiments>3</experiments>
</comment>
<comment type="interaction">
    <interactant intactId="EBI-750020">
        <id>P49760</id>
    </interactant>
    <interactant intactId="EBI-751409">
        <id>Q8WTR7</id>
        <label>ZNF473</label>
    </interactant>
    <organismsDiffer>false</organismsDiffer>
    <experiments>3</experiments>
</comment>
<comment type="interaction">
    <interactant intactId="EBI-750020">
        <id>P49760</id>
    </interactant>
    <interactant intactId="EBI-12019860">
        <id>Q8N8L2</id>
        <label>ZNF491</label>
    </interactant>
    <organismsDiffer>false</organismsDiffer>
    <experiments>3</experiments>
</comment>
<comment type="interaction">
    <interactant intactId="EBI-750020">
        <id>P49760</id>
    </interactant>
    <interactant intactId="EBI-373363">
        <id>Q96NG5</id>
        <label>ZNF558</label>
    </interactant>
    <organismsDiffer>false</organismsDiffer>
    <experiments>3</experiments>
</comment>
<comment type="interaction">
    <interactant intactId="EBI-750020">
        <id>P49760</id>
    </interactant>
    <interactant intactId="EBI-745775">
        <id>Q96H86</id>
        <label>ZNF764</label>
    </interactant>
    <organismsDiffer>false</organismsDiffer>
    <experiments>3</experiments>
</comment>
<comment type="interaction">
    <interactant intactId="EBI-750020">
        <id>P49760</id>
    </interactant>
    <interactant intactId="EBI-1210580">
        <id>Q9H5H4</id>
        <label>ZNF768</label>
    </interactant>
    <organismsDiffer>false</organismsDiffer>
    <experiments>3</experiments>
</comment>
<comment type="interaction">
    <interactant intactId="EBI-750020">
        <id>P49760</id>
    </interactant>
    <interactant intactId="EBI-11962574">
        <id>Q96EG3</id>
        <label>ZNF837</label>
    </interactant>
    <organismsDiffer>false</organismsDiffer>
    <experiments>3</experiments>
</comment>
<comment type="interaction">
    <interactant intactId="EBI-750020">
        <id>P49760</id>
    </interactant>
    <interactant intactId="EBI-6657923">
        <id>Q15696</id>
        <label>ZRSR2</label>
    </interactant>
    <organismsDiffer>false</organismsDiffer>
    <experiments>8</experiments>
</comment>
<comment type="interaction">
    <interactant intactId="EBI-750020">
        <id>P49760</id>
    </interactant>
    <interactant intactId="EBI-10281938">
        <id>Q9Y5A6</id>
        <label>ZSCAN21</label>
    </interactant>
    <organismsDiffer>false</organismsDiffer>
    <experiments>5</experiments>
</comment>
<comment type="interaction">
    <interactant intactId="EBI-11535445">
        <id>P49760-3</id>
    </interactant>
    <interactant intactId="EBI-16438171">
        <id>A0A0S2Z4Z6</id>
        <label>SRRM1</label>
    </interactant>
    <organismsDiffer>false</organismsDiffer>
    <experiments>3</experiments>
</comment>
<comment type="interaction">
    <interactant intactId="EBI-11535445">
        <id>P49760-3</id>
    </interactant>
    <interactant intactId="EBI-1055880">
        <id>Q8IYB3</id>
        <label>SRRM1</label>
    </interactant>
    <organismsDiffer>false</organismsDiffer>
    <experiments>3</experiments>
</comment>
<comment type="subcellular location">
    <subcellularLocation>
        <location evidence="11">Nucleus</location>
    </subcellularLocation>
</comment>
<comment type="subcellular location">
    <molecule>Isoform 1</molecule>
    <subcellularLocation>
        <location evidence="13">Nucleus</location>
    </subcellularLocation>
    <subcellularLocation>
        <location evidence="13">Nucleus speckle</location>
    </subcellularLocation>
    <text evidence="2">Inhibition of phosphorylation at Ser-142 results in accumulation in the nuclear speckle.</text>
</comment>
<comment type="subcellular location">
    <molecule>Isoform 2</molecule>
    <subcellularLocation>
        <location evidence="13">Nucleus speckle</location>
    </subcellularLocation>
    <text evidence="13">Co-localizes with serine- and arginine-rich (SR) proteins in the nuclear speckles.</text>
</comment>
<comment type="alternative products">
    <event type="alternative splicing"/>
    <isoform>
        <id>P49760-1</id>
        <name>1</name>
        <name>Long</name>
        <sequence type="displayed"/>
    </isoform>
    <isoform>
        <id>P49760-2</id>
        <name>2</name>
        <name>Short</name>
        <sequence type="described" ref="VSP_004856 VSP_004857"/>
    </isoform>
    <isoform>
        <id>P49760-3</id>
        <name>3</name>
        <sequence type="described" ref="VSP_038744"/>
    </isoform>
</comment>
<comment type="tissue specificity">
    <text evidence="8 11">Endothelial cells (PubMed:19168442). Expressed in androgen-dependent prostate cancer cells (PubMed:28289210).</text>
</comment>
<comment type="PTM">
    <text evidence="10 13">Autophosphorylates on all three types of residues. Phosphorylation on Ser-34 and Thr-127 by AKT1 is induced by ionizing radiation or insulin. Phosphorylation plays a critical role in cell proliferation following low dose radiation and prevents cell death following high dose radiation. Phosphorylation at Thr-344 by PKB/AKT2 induces its kinase activity which is required for its stability. The phosphorylation status at Ser-142 influences its subnuclear localization; inhibition of phosphorylation at Ser-142 results in accumulation in the nuclear speckle.</text>
</comment>
<comment type="miscellaneous">
    <molecule>Isoform 2</molecule>
    <text evidence="16">Lacks the kinase domain. May be produced at very low levels due to a premature stop codon in the mRNA, leading to nonsense-mediated mRNA decay.</text>
</comment>
<comment type="similarity">
    <text evidence="16">Belongs to the protein kinase superfamily. CMGC Ser/Thr protein kinase family. Lammer subfamily.</text>
</comment>
<accession>P49760</accession>
<accession>B1AVS9</accession>
<accession>B5MBX6</accession>
<accession>Q96CQ0</accession>
<feature type="chain" id="PRO_0000085868" description="Dual specificity protein kinase CLK2">
    <location>
        <begin position="1"/>
        <end position="499"/>
    </location>
</feature>
<feature type="domain" description="Protein kinase" evidence="3">
    <location>
        <begin position="163"/>
        <end position="479"/>
    </location>
</feature>
<feature type="region of interest" description="Disordered" evidence="5">
    <location>
        <begin position="1"/>
        <end position="67"/>
    </location>
</feature>
<feature type="region of interest" description="Disordered" evidence="5">
    <location>
        <begin position="101"/>
        <end position="143"/>
    </location>
</feature>
<feature type="compositionally biased region" description="Basic and acidic residues" evidence="5">
    <location>
        <begin position="8"/>
        <end position="21"/>
    </location>
</feature>
<feature type="compositionally biased region" description="Basic residues" evidence="5">
    <location>
        <begin position="22"/>
        <end position="33"/>
    </location>
</feature>
<feature type="compositionally biased region" description="Basic and acidic residues" evidence="5">
    <location>
        <begin position="47"/>
        <end position="67"/>
    </location>
</feature>
<feature type="compositionally biased region" description="Basic residues" evidence="5">
    <location>
        <begin position="112"/>
        <end position="127"/>
    </location>
</feature>
<feature type="active site" description="Proton acceptor" evidence="3 4">
    <location>
        <position position="290"/>
    </location>
</feature>
<feature type="binding site" evidence="3">
    <location>
        <begin position="169"/>
        <end position="177"/>
    </location>
    <ligand>
        <name>ATP</name>
        <dbReference type="ChEBI" id="CHEBI:30616"/>
    </ligand>
</feature>
<feature type="binding site" evidence="3">
    <location>
        <position position="193"/>
    </location>
    <ligand>
        <name>ATP</name>
        <dbReference type="ChEBI" id="CHEBI:30616"/>
    </ligand>
</feature>
<feature type="modified residue" description="Phosphoserine; by PKB/AKT1" evidence="10">
    <location>
        <position position="34"/>
    </location>
</feature>
<feature type="modified residue" description="Phosphoserine" evidence="20">
    <location>
        <position position="98"/>
    </location>
</feature>
<feature type="modified residue" description="Phosphotyrosine; by autocatalysis" evidence="2">
    <location>
        <position position="99"/>
    </location>
</feature>
<feature type="modified residue" description="Phosphothreonine; by PKB/AKT1" evidence="10">
    <location>
        <position position="127"/>
    </location>
</feature>
<feature type="modified residue" description="Phosphoserine; by autocatalysis" evidence="17 18 19 20">
    <location>
        <position position="142"/>
    </location>
</feature>
<feature type="modified residue" description="Phosphotyrosine" evidence="19">
    <location>
        <position position="153"/>
    </location>
</feature>
<feature type="modified residue" description="Phosphothreonine; by PKB/AKT2" evidence="2">
    <location>
        <position position="344"/>
    </location>
</feature>
<feature type="splice variant" id="VSP_004856" description="In isoform 2." evidence="15">
    <original>QHSSRR</original>
    <variation>MKSLAP</variation>
    <location>
        <begin position="134"/>
        <end position="139"/>
    </location>
</feature>
<feature type="splice variant" id="VSP_038744" description="In isoform 3." evidence="14">
    <location>
        <position position="134"/>
    </location>
</feature>
<feature type="splice variant" id="VSP_004857" description="In isoform 2." evidence="15">
    <location>
        <begin position="140"/>
        <end position="499"/>
    </location>
</feature>
<feature type="strand" evidence="22">
    <location>
        <begin position="142"/>
        <end position="144"/>
    </location>
</feature>
<feature type="turn" evidence="22">
    <location>
        <begin position="146"/>
        <end position="149"/>
    </location>
</feature>
<feature type="turn" evidence="23">
    <location>
        <begin position="160"/>
        <end position="162"/>
    </location>
</feature>
<feature type="strand" evidence="23">
    <location>
        <begin position="163"/>
        <end position="171"/>
    </location>
</feature>
<feature type="strand" evidence="23">
    <location>
        <begin position="173"/>
        <end position="182"/>
    </location>
</feature>
<feature type="turn" evidence="23">
    <location>
        <begin position="183"/>
        <end position="187"/>
    </location>
</feature>
<feature type="strand" evidence="23">
    <location>
        <begin position="189"/>
        <end position="195"/>
    </location>
</feature>
<feature type="helix" evidence="23">
    <location>
        <begin position="199"/>
        <end position="218"/>
    </location>
</feature>
<feature type="strand" evidence="22">
    <location>
        <begin position="224"/>
        <end position="226"/>
    </location>
</feature>
<feature type="strand" evidence="23">
    <location>
        <begin position="229"/>
        <end position="235"/>
    </location>
</feature>
<feature type="strand" evidence="23">
    <location>
        <begin position="238"/>
        <end position="244"/>
    </location>
</feature>
<feature type="helix" evidence="23">
    <location>
        <begin position="250"/>
        <end position="256"/>
    </location>
</feature>
<feature type="turn" evidence="23">
    <location>
        <begin position="257"/>
        <end position="259"/>
    </location>
</feature>
<feature type="helix" evidence="23">
    <location>
        <begin position="264"/>
        <end position="283"/>
    </location>
</feature>
<feature type="helix" evidence="23">
    <location>
        <begin position="293"/>
        <end position="295"/>
    </location>
</feature>
<feature type="strand" evidence="23">
    <location>
        <begin position="296"/>
        <end position="299"/>
    </location>
</feature>
<feature type="strand" evidence="23">
    <location>
        <begin position="303"/>
        <end position="308"/>
    </location>
</feature>
<feature type="turn" evidence="23">
    <location>
        <begin position="309"/>
        <end position="312"/>
    </location>
</feature>
<feature type="strand" evidence="23">
    <location>
        <begin position="313"/>
        <end position="319"/>
    </location>
</feature>
<feature type="strand" evidence="23">
    <location>
        <begin position="323"/>
        <end position="325"/>
    </location>
</feature>
<feature type="helix" evidence="24">
    <location>
        <begin position="328"/>
        <end position="330"/>
    </location>
</feature>
<feature type="strand" evidence="21">
    <location>
        <begin position="332"/>
        <end position="336"/>
    </location>
</feature>
<feature type="helix" evidence="23">
    <location>
        <begin position="345"/>
        <end position="347"/>
    </location>
</feature>
<feature type="helix" evidence="23">
    <location>
        <begin position="350"/>
        <end position="353"/>
    </location>
</feature>
<feature type="helix" evidence="23">
    <location>
        <begin position="361"/>
        <end position="376"/>
    </location>
</feature>
<feature type="helix" evidence="23">
    <location>
        <begin position="386"/>
        <end position="397"/>
    </location>
</feature>
<feature type="helix" evidence="23">
    <location>
        <begin position="402"/>
        <end position="407"/>
    </location>
</feature>
<feature type="helix" evidence="23">
    <location>
        <begin position="411"/>
        <end position="413"/>
    </location>
</feature>
<feature type="strand" evidence="24">
    <location>
        <begin position="423"/>
        <end position="425"/>
    </location>
</feature>
<feature type="helix" evidence="23">
    <location>
        <begin position="426"/>
        <end position="434"/>
    </location>
</feature>
<feature type="helix" evidence="23">
    <location>
        <begin position="438"/>
        <end position="441"/>
    </location>
</feature>
<feature type="helix" evidence="23">
    <location>
        <begin position="447"/>
        <end position="459"/>
    </location>
</feature>
<feature type="turn" evidence="23">
    <location>
        <begin position="464"/>
        <end position="466"/>
    </location>
</feature>
<feature type="helix" evidence="23">
    <location>
        <begin position="470"/>
        <end position="473"/>
    </location>
</feature>
<feature type="helix" evidence="23">
    <location>
        <begin position="477"/>
        <end position="479"/>
    </location>
</feature>
<feature type="helix" evidence="21">
    <location>
        <begin position="480"/>
        <end position="483"/>
    </location>
</feature>
<sequence length="499" mass="60090">MPHPRRYHSSERGSRGSYREHYRSRKHKRRRSRSWSSSSDRTRRRRREDSYHVRSRSSYDDRSSDRRVYDRRYCGSYRRNDYSRDRGDAYYDTDYRHSYEYQRENSSYRSQRSSRRKHRRRRRRSRTFSRSSSQHSSRRAKSVEDDAEGHLIYHVGDWLQERYEIVSTLGEGTFGRVVQCVDHRRGGARVALKIIKNVEKYKEAARLEINVLEKINEKDPDNKNLCVQMFDWFDYHGHMCISFELLGLSTFDFLKDNNYLPYPIHQVRHMAFQLCQAVKFLHDNKLTHTDLKPENILFVNSDYELTYNLEKKRDERSVKSTAVRVVDFGSATFDHEHHSTIVSTRHYRAPEVILELGWSQPCDVWSIGCIIFEYYVGFTLFQTHDNREHLAMMERILGPIPSRMIRKTRKQKYFYRGRLDWDENTSAGRYVRENCKPLRRYLTSEAEEHHQLFDLIESMLEYEPAKRLTLGEALQHPFFARLRAEPPNKLWDSSRDISR</sequence>
<organism>
    <name type="scientific">Homo sapiens</name>
    <name type="common">Human</name>
    <dbReference type="NCBI Taxonomy" id="9606"/>
    <lineage>
        <taxon>Eukaryota</taxon>
        <taxon>Metazoa</taxon>
        <taxon>Chordata</taxon>
        <taxon>Craniata</taxon>
        <taxon>Vertebrata</taxon>
        <taxon>Euteleostomi</taxon>
        <taxon>Mammalia</taxon>
        <taxon>Eutheria</taxon>
        <taxon>Euarchontoglires</taxon>
        <taxon>Primates</taxon>
        <taxon>Haplorrhini</taxon>
        <taxon>Catarrhini</taxon>
        <taxon>Hominidae</taxon>
        <taxon>Homo</taxon>
    </lineage>
</organism>
<evidence type="ECO:0000250" key="1"/>
<evidence type="ECO:0000250" key="2">
    <source>
        <dbReference type="UniProtKB" id="O35491"/>
    </source>
</evidence>
<evidence type="ECO:0000255" key="3">
    <source>
        <dbReference type="PROSITE-ProRule" id="PRU00159"/>
    </source>
</evidence>
<evidence type="ECO:0000255" key="4">
    <source>
        <dbReference type="PROSITE-ProRule" id="PRU10027"/>
    </source>
</evidence>
<evidence type="ECO:0000256" key="5">
    <source>
        <dbReference type="SAM" id="MobiDB-lite"/>
    </source>
</evidence>
<evidence type="ECO:0000269" key="6">
    <source>
    </source>
</evidence>
<evidence type="ECO:0000269" key="7">
    <source>
    </source>
</evidence>
<evidence type="ECO:0000269" key="8">
    <source>
    </source>
</evidence>
<evidence type="ECO:0000269" key="9">
    <source>
    </source>
</evidence>
<evidence type="ECO:0000269" key="10">
    <source>
    </source>
</evidence>
<evidence type="ECO:0000269" key="11">
    <source>
    </source>
</evidence>
<evidence type="ECO:0000269" key="12">
    <source>
    </source>
</evidence>
<evidence type="ECO:0000269" key="13">
    <source>
    </source>
</evidence>
<evidence type="ECO:0000303" key="14">
    <source>
    </source>
</evidence>
<evidence type="ECO:0000303" key="15">
    <source>
    </source>
</evidence>
<evidence type="ECO:0000305" key="16"/>
<evidence type="ECO:0007744" key="17">
    <source>
    </source>
</evidence>
<evidence type="ECO:0007744" key="18">
    <source>
    </source>
</evidence>
<evidence type="ECO:0007744" key="19">
    <source>
    </source>
</evidence>
<evidence type="ECO:0007744" key="20">
    <source>
    </source>
</evidence>
<evidence type="ECO:0007829" key="21">
    <source>
        <dbReference type="PDB" id="3NR9"/>
    </source>
</evidence>
<evidence type="ECO:0007829" key="22">
    <source>
        <dbReference type="PDB" id="6FYK"/>
    </source>
</evidence>
<evidence type="ECO:0007829" key="23">
    <source>
        <dbReference type="PDB" id="6FYL"/>
    </source>
</evidence>
<evidence type="ECO:0007829" key="24">
    <source>
        <dbReference type="PDB" id="6KHE"/>
    </source>
</evidence>
<dbReference type="EC" id="2.7.12.1"/>
<dbReference type="EMBL" id="L29218">
    <property type="protein sequence ID" value="AAA61482.1"/>
    <property type="molecule type" value="mRNA"/>
</dbReference>
<dbReference type="EMBL" id="L29216">
    <property type="protein sequence ID" value="AAA61481.1"/>
    <property type="molecule type" value="mRNA"/>
</dbReference>
<dbReference type="EMBL" id="AF023268">
    <property type="protein sequence ID" value="AAC51817.1"/>
    <property type="molecule type" value="Genomic_DNA"/>
</dbReference>
<dbReference type="EMBL" id="AL713999">
    <property type="status" value="NOT_ANNOTATED_CDS"/>
    <property type="molecule type" value="Genomic_DNA"/>
</dbReference>
<dbReference type="EMBL" id="BC014067">
    <property type="protein sequence ID" value="AAH14067.1"/>
    <property type="molecule type" value="mRNA"/>
</dbReference>
<dbReference type="EMBL" id="BC053603">
    <property type="protein sequence ID" value="AAH53603.1"/>
    <property type="molecule type" value="mRNA"/>
</dbReference>
<dbReference type="CCDS" id="CCDS1107.1">
    <molecule id="P49760-3"/>
</dbReference>
<dbReference type="CCDS" id="CCDS72939.1">
    <molecule id="P49760-1"/>
</dbReference>
<dbReference type="PIR" id="S53637">
    <property type="entry name" value="S53637"/>
</dbReference>
<dbReference type="PIR" id="S53638">
    <property type="entry name" value="S53638"/>
</dbReference>
<dbReference type="RefSeq" id="NP_001281267.1">
    <molecule id="P49760-1"/>
    <property type="nucleotide sequence ID" value="NM_001294338.2"/>
</dbReference>
<dbReference type="RefSeq" id="NP_001281268.1">
    <property type="nucleotide sequence ID" value="NM_001294339.1"/>
</dbReference>
<dbReference type="RefSeq" id="NP_003984.2">
    <molecule id="P49760-3"/>
    <property type="nucleotide sequence ID" value="NM_003993.3"/>
</dbReference>
<dbReference type="PDB" id="3NR9">
    <property type="method" value="X-ray"/>
    <property type="resolution" value="2.89 A"/>
    <property type="chains" value="A/B/C=135-496"/>
</dbReference>
<dbReference type="PDB" id="5UNP">
    <property type="method" value="X-ray"/>
    <property type="resolution" value="2.92 A"/>
    <property type="chains" value="A/B=129-496"/>
</dbReference>
<dbReference type="PDB" id="6FYI">
    <property type="method" value="X-ray"/>
    <property type="resolution" value="2.60 A"/>
    <property type="chains" value="A=132-496"/>
</dbReference>
<dbReference type="PDB" id="6FYK">
    <property type="method" value="X-ray"/>
    <property type="resolution" value="2.39 A"/>
    <property type="chains" value="A/B/C=136-496"/>
</dbReference>
<dbReference type="PDB" id="6FYL">
    <property type="method" value="X-ray"/>
    <property type="resolution" value="1.95 A"/>
    <property type="chains" value="A=136-496"/>
</dbReference>
<dbReference type="PDB" id="6KHE">
    <property type="method" value="X-ray"/>
    <property type="resolution" value="2.80 A"/>
    <property type="chains" value="A=1-499"/>
</dbReference>
<dbReference type="PDBsum" id="3NR9"/>
<dbReference type="PDBsum" id="5UNP"/>
<dbReference type="PDBsum" id="6FYI"/>
<dbReference type="PDBsum" id="6FYK"/>
<dbReference type="PDBsum" id="6FYL"/>
<dbReference type="PDBsum" id="6KHE"/>
<dbReference type="SMR" id="P49760"/>
<dbReference type="BioGRID" id="107607">
    <property type="interactions" value="207"/>
</dbReference>
<dbReference type="DIP" id="DIP-42277N"/>
<dbReference type="FunCoup" id="P49760">
    <property type="interactions" value="3224"/>
</dbReference>
<dbReference type="IntAct" id="P49760">
    <property type="interactions" value="176"/>
</dbReference>
<dbReference type="MINT" id="P49760"/>
<dbReference type="STRING" id="9606.ENSP00000357345"/>
<dbReference type="BindingDB" id="P49760"/>
<dbReference type="ChEMBL" id="CHEMBL4225"/>
<dbReference type="DrugBank" id="DB12010">
    <property type="generic name" value="Fostamatinib"/>
</dbReference>
<dbReference type="DrugCentral" id="P49760"/>
<dbReference type="GuidetoPHARMACOLOGY" id="1991"/>
<dbReference type="iPTMnet" id="P49760"/>
<dbReference type="PhosphoSitePlus" id="P49760"/>
<dbReference type="BioMuta" id="CLK2"/>
<dbReference type="DMDM" id="1705919"/>
<dbReference type="CPTAC" id="CPTAC-3158"/>
<dbReference type="jPOST" id="P49760"/>
<dbReference type="MassIVE" id="P49760"/>
<dbReference type="PaxDb" id="9606-ENSP00000357345"/>
<dbReference type="PeptideAtlas" id="P49760"/>
<dbReference type="ProteomicsDB" id="56093">
    <molecule id="P49760-1"/>
</dbReference>
<dbReference type="ProteomicsDB" id="56094">
    <molecule id="P49760-2"/>
</dbReference>
<dbReference type="ProteomicsDB" id="56095">
    <molecule id="P49760-3"/>
</dbReference>
<dbReference type="Pumba" id="P49760"/>
<dbReference type="Antibodypedia" id="34187">
    <property type="antibodies" value="323 antibodies from 31 providers"/>
</dbReference>
<dbReference type="DNASU" id="1196"/>
<dbReference type="Ensembl" id="ENST00000361168.9">
    <molecule id="P49760-3"/>
    <property type="protein sequence ID" value="ENSP00000354856.5"/>
    <property type="gene ID" value="ENSG00000176444.20"/>
</dbReference>
<dbReference type="Ensembl" id="ENST00000368361.9">
    <molecule id="P49760-1"/>
    <property type="protein sequence ID" value="ENSP00000357345.4"/>
    <property type="gene ID" value="ENSG00000176444.20"/>
</dbReference>
<dbReference type="Ensembl" id="ENST00000572269.5">
    <molecule id="P49760-3"/>
    <property type="protein sequence ID" value="ENSP00000459461.1"/>
    <property type="gene ID" value="ENSG00000261893.5"/>
</dbReference>
<dbReference type="Ensembl" id="ENST00000574445.5">
    <molecule id="P49760-1"/>
    <property type="protein sequence ID" value="ENSP00000460443.1"/>
    <property type="gene ID" value="ENSG00000261893.5"/>
</dbReference>
<dbReference type="GeneID" id="1196"/>
<dbReference type="KEGG" id="hsa:1196"/>
<dbReference type="MANE-Select" id="ENST00000368361.9">
    <property type="protein sequence ID" value="ENSP00000357345.4"/>
    <property type="RefSeq nucleotide sequence ID" value="NM_001294338.2"/>
    <property type="RefSeq protein sequence ID" value="NP_001281267.1"/>
</dbReference>
<dbReference type="UCSC" id="uc001fjw.4">
    <molecule id="P49760-1"/>
    <property type="organism name" value="human"/>
</dbReference>
<dbReference type="AGR" id="HGNC:2069"/>
<dbReference type="CTD" id="1196"/>
<dbReference type="DisGeNET" id="1196"/>
<dbReference type="GeneCards" id="CLK2"/>
<dbReference type="HGNC" id="HGNC:2069">
    <property type="gene designation" value="CLK2"/>
</dbReference>
<dbReference type="HPA" id="ENSG00000176444">
    <property type="expression patterns" value="Low tissue specificity"/>
</dbReference>
<dbReference type="MalaCards" id="CLK2"/>
<dbReference type="MIM" id="602989">
    <property type="type" value="gene"/>
</dbReference>
<dbReference type="neXtProt" id="NX_P49760"/>
<dbReference type="OpenTargets" id="ENSG00000176444"/>
<dbReference type="PharmGKB" id="PA26595"/>
<dbReference type="VEuPathDB" id="HostDB:ENSG00000176444"/>
<dbReference type="eggNOG" id="KOG0671">
    <property type="taxonomic scope" value="Eukaryota"/>
</dbReference>
<dbReference type="GeneTree" id="ENSGT00940000154947"/>
<dbReference type="InParanoid" id="P49760"/>
<dbReference type="OMA" id="RHHIQSF"/>
<dbReference type="OrthoDB" id="1924787at2759"/>
<dbReference type="PAN-GO" id="P49760">
    <property type="GO annotations" value="5 GO annotations based on evolutionary models"/>
</dbReference>
<dbReference type="PhylomeDB" id="P49760"/>
<dbReference type="TreeFam" id="TF101041"/>
<dbReference type="BRENDA" id="2.7.12.1">
    <property type="organism ID" value="2681"/>
</dbReference>
<dbReference type="PathwayCommons" id="P49760"/>
<dbReference type="SignaLink" id="P49760"/>
<dbReference type="SIGNOR" id="P49760"/>
<dbReference type="BioGRID-ORCS" id="1196">
    <property type="hits" value="111 hits in 1197 CRISPR screens"/>
</dbReference>
<dbReference type="CD-CODE" id="804901D1">
    <property type="entry name" value="Nuclear speckle"/>
</dbReference>
<dbReference type="ChiTaRS" id="CLK2">
    <property type="organism name" value="human"/>
</dbReference>
<dbReference type="EvolutionaryTrace" id="P49760"/>
<dbReference type="GeneWiki" id="CLK2"/>
<dbReference type="GenomeRNAi" id="1196"/>
<dbReference type="Pharos" id="P49760">
    <property type="development level" value="Tchem"/>
</dbReference>
<dbReference type="PRO" id="PR:P49760"/>
<dbReference type="Proteomes" id="UP000005640">
    <property type="component" value="Chromosome 1"/>
</dbReference>
<dbReference type="RNAct" id="P49760">
    <property type="molecule type" value="protein"/>
</dbReference>
<dbReference type="Bgee" id="ENSG00000176444">
    <property type="expression patterns" value="Expressed in right uterine tube and 96 other cell types or tissues"/>
</dbReference>
<dbReference type="ExpressionAtlas" id="P49760">
    <property type="expression patterns" value="baseline and differential"/>
</dbReference>
<dbReference type="GO" id="GO:0016604">
    <property type="term" value="C:nuclear body"/>
    <property type="evidence" value="ECO:0000314"/>
    <property type="project" value="HPA"/>
</dbReference>
<dbReference type="GO" id="GO:0016607">
    <property type="term" value="C:nuclear speck"/>
    <property type="evidence" value="ECO:0007669"/>
    <property type="project" value="UniProtKB-SubCell"/>
</dbReference>
<dbReference type="GO" id="GO:0005654">
    <property type="term" value="C:nucleoplasm"/>
    <property type="evidence" value="ECO:0000314"/>
    <property type="project" value="HPA"/>
</dbReference>
<dbReference type="GO" id="GO:0005634">
    <property type="term" value="C:nucleus"/>
    <property type="evidence" value="ECO:0000314"/>
    <property type="project" value="UniProtKB"/>
</dbReference>
<dbReference type="GO" id="GO:0005524">
    <property type="term" value="F:ATP binding"/>
    <property type="evidence" value="ECO:0007669"/>
    <property type="project" value="UniProtKB-KW"/>
</dbReference>
<dbReference type="GO" id="GO:0042802">
    <property type="term" value="F:identical protein binding"/>
    <property type="evidence" value="ECO:0000353"/>
    <property type="project" value="IntAct"/>
</dbReference>
<dbReference type="GO" id="GO:0106310">
    <property type="term" value="F:protein serine kinase activity"/>
    <property type="evidence" value="ECO:0007669"/>
    <property type="project" value="RHEA"/>
</dbReference>
<dbReference type="GO" id="GO:0004674">
    <property type="term" value="F:protein serine/threonine kinase activity"/>
    <property type="evidence" value="ECO:0000314"/>
    <property type="project" value="UniProtKB"/>
</dbReference>
<dbReference type="GO" id="GO:0004712">
    <property type="term" value="F:protein serine/threonine/tyrosine kinase activity"/>
    <property type="evidence" value="ECO:0007669"/>
    <property type="project" value="UniProtKB-EC"/>
</dbReference>
<dbReference type="GO" id="GO:0004713">
    <property type="term" value="F:protein tyrosine kinase activity"/>
    <property type="evidence" value="ECO:0000318"/>
    <property type="project" value="GO_Central"/>
</dbReference>
<dbReference type="GO" id="GO:0045721">
    <property type="term" value="P:negative regulation of gluconeogenesis"/>
    <property type="evidence" value="ECO:0000250"/>
    <property type="project" value="UniProtKB"/>
</dbReference>
<dbReference type="GO" id="GO:0046777">
    <property type="term" value="P:protein autophosphorylation"/>
    <property type="evidence" value="ECO:0000250"/>
    <property type="project" value="UniProtKB"/>
</dbReference>
<dbReference type="GO" id="GO:0006468">
    <property type="term" value="P:protein phosphorylation"/>
    <property type="evidence" value="ECO:0000314"/>
    <property type="project" value="UniProtKB"/>
</dbReference>
<dbReference type="GO" id="GO:0043484">
    <property type="term" value="P:regulation of RNA splicing"/>
    <property type="evidence" value="ECO:0000314"/>
    <property type="project" value="UniProtKB"/>
</dbReference>
<dbReference type="GO" id="GO:0010212">
    <property type="term" value="P:response to ionizing radiation"/>
    <property type="evidence" value="ECO:0000315"/>
    <property type="project" value="UniProtKB"/>
</dbReference>
<dbReference type="CDD" id="cd14215">
    <property type="entry name" value="PKc_CLK2"/>
    <property type="match status" value="1"/>
</dbReference>
<dbReference type="FunFam" id="1.10.510.10:FF:000145">
    <property type="entry name" value="Dual specificity protein kinase CLK2"/>
    <property type="match status" value="1"/>
</dbReference>
<dbReference type="FunFam" id="3.30.200.20:FF:000061">
    <property type="entry name" value="Dual specificity protein kinase CLK2"/>
    <property type="match status" value="1"/>
</dbReference>
<dbReference type="Gene3D" id="3.30.200.20">
    <property type="entry name" value="Phosphorylase Kinase, domain 1"/>
    <property type="match status" value="1"/>
</dbReference>
<dbReference type="Gene3D" id="1.10.510.10">
    <property type="entry name" value="Transferase(Phosphotransferase) domain 1"/>
    <property type="match status" value="1"/>
</dbReference>
<dbReference type="InterPro" id="IPR051175">
    <property type="entry name" value="CLK_kinases"/>
</dbReference>
<dbReference type="InterPro" id="IPR011009">
    <property type="entry name" value="Kinase-like_dom_sf"/>
</dbReference>
<dbReference type="InterPro" id="IPR000719">
    <property type="entry name" value="Prot_kinase_dom"/>
</dbReference>
<dbReference type="InterPro" id="IPR017441">
    <property type="entry name" value="Protein_kinase_ATP_BS"/>
</dbReference>
<dbReference type="InterPro" id="IPR008271">
    <property type="entry name" value="Ser/Thr_kinase_AS"/>
</dbReference>
<dbReference type="PANTHER" id="PTHR45646:SF6">
    <property type="entry name" value="DUAL SPECIFICITY PROTEIN KINASE CLK2"/>
    <property type="match status" value="1"/>
</dbReference>
<dbReference type="PANTHER" id="PTHR45646">
    <property type="entry name" value="SERINE/THREONINE-PROTEIN KINASE DOA-RELATED"/>
    <property type="match status" value="1"/>
</dbReference>
<dbReference type="Pfam" id="PF00069">
    <property type="entry name" value="Pkinase"/>
    <property type="match status" value="1"/>
</dbReference>
<dbReference type="SMART" id="SM00220">
    <property type="entry name" value="S_TKc"/>
    <property type="match status" value="1"/>
</dbReference>
<dbReference type="SUPFAM" id="SSF56112">
    <property type="entry name" value="Protein kinase-like (PK-like)"/>
    <property type="match status" value="1"/>
</dbReference>
<dbReference type="PROSITE" id="PS00107">
    <property type="entry name" value="PROTEIN_KINASE_ATP"/>
    <property type="match status" value="1"/>
</dbReference>
<dbReference type="PROSITE" id="PS50011">
    <property type="entry name" value="PROTEIN_KINASE_DOM"/>
    <property type="match status" value="1"/>
</dbReference>
<dbReference type="PROSITE" id="PS00108">
    <property type="entry name" value="PROTEIN_KINASE_ST"/>
    <property type="match status" value="1"/>
</dbReference>